<dbReference type="EMBL" id="AJ414557">
    <property type="protein sequence ID" value="CAC93688.1"/>
    <property type="molecule type" value="mRNA"/>
</dbReference>
<dbReference type="EMBL" id="BT020840">
    <property type="protein sequence ID" value="AAX08857.1"/>
    <property type="molecule type" value="mRNA"/>
</dbReference>
<dbReference type="EMBL" id="BT020753">
    <property type="protein sequence ID" value="AAX08770.1"/>
    <property type="molecule type" value="mRNA"/>
</dbReference>
<dbReference type="EMBL" id="BT020767">
    <property type="protein sequence ID" value="AAX08784.1"/>
    <property type="molecule type" value="mRNA"/>
</dbReference>
<dbReference type="EMBL" id="BT020872">
    <property type="protein sequence ID" value="AAX08889.1"/>
    <property type="molecule type" value="mRNA"/>
</dbReference>
<dbReference type="EMBL" id="BC133306">
    <property type="protein sequence ID" value="AAI33307.1"/>
    <property type="molecule type" value="mRNA"/>
</dbReference>
<dbReference type="RefSeq" id="NP_776779.1">
    <property type="nucleotide sequence ID" value="NM_174354.3"/>
</dbReference>
<dbReference type="RefSeq" id="XP_005227784.1">
    <property type="nucleotide sequence ID" value="XM_005227727.5"/>
</dbReference>
<dbReference type="RefSeq" id="XP_005227785.1">
    <property type="nucleotide sequence ID" value="XM_005227728.5"/>
</dbReference>
<dbReference type="RefSeq" id="XP_005227786.1">
    <property type="nucleotide sequence ID" value="XM_005227729.5"/>
</dbReference>
<dbReference type="RefSeq" id="XP_015316989.1">
    <property type="nucleotide sequence ID" value="XM_015461503.3"/>
</dbReference>
<dbReference type="SMR" id="Q95KU9"/>
<dbReference type="BioGRID" id="159166">
    <property type="interactions" value="4"/>
</dbReference>
<dbReference type="FunCoup" id="Q95KU9">
    <property type="interactions" value="2205"/>
</dbReference>
<dbReference type="STRING" id="9913.ENSBTAP00000008224"/>
<dbReference type="PaxDb" id="9913-ENSBTAP00000008224"/>
<dbReference type="GeneID" id="281855"/>
<dbReference type="KEGG" id="bta:281855"/>
<dbReference type="CTD" id="8517"/>
<dbReference type="VEuPathDB" id="HostDB:ENSBTAG00000006268"/>
<dbReference type="eggNOG" id="ENOG502R4ZD">
    <property type="taxonomic scope" value="Eukaryota"/>
</dbReference>
<dbReference type="HOGENOM" id="CLU_034097_0_0_1"/>
<dbReference type="InParanoid" id="Q95KU9"/>
<dbReference type="OMA" id="VAMRKNF"/>
<dbReference type="OrthoDB" id="6343844at2759"/>
<dbReference type="TreeFam" id="TF326608"/>
<dbReference type="Reactome" id="R-BTA-1169091">
    <property type="pathway name" value="Activation of NF-kappaB in B cells"/>
</dbReference>
<dbReference type="Reactome" id="R-BTA-168638">
    <property type="pathway name" value="NOD1/2 Signaling Pathway"/>
</dbReference>
<dbReference type="Reactome" id="R-BTA-1810476">
    <property type="pathway name" value="RIP-mediated NFkB activation via ZBP1"/>
</dbReference>
<dbReference type="Reactome" id="R-BTA-202424">
    <property type="pathway name" value="Downstream TCR signaling"/>
</dbReference>
<dbReference type="Reactome" id="R-BTA-2871837">
    <property type="pathway name" value="FCERI mediated NF-kB activation"/>
</dbReference>
<dbReference type="Reactome" id="R-BTA-445989">
    <property type="pathway name" value="TAK1-dependent IKK and NF-kappa-B activation"/>
</dbReference>
<dbReference type="Reactome" id="R-BTA-450302">
    <property type="pathway name" value="activated TAK1 mediates p38 MAPK activation"/>
</dbReference>
<dbReference type="Reactome" id="R-BTA-450321">
    <property type="pathway name" value="JNK (c-Jun kinases) phosphorylation and activation mediated by activated human TAK1"/>
</dbReference>
<dbReference type="Reactome" id="R-BTA-4755510">
    <property type="pathway name" value="SUMOylation of immune response proteins"/>
</dbReference>
<dbReference type="Reactome" id="R-BTA-5357905">
    <property type="pathway name" value="Regulation of TNFR1 signaling"/>
</dbReference>
<dbReference type="Reactome" id="R-BTA-5357956">
    <property type="pathway name" value="TNFR1-induced NF-kappa-B signaling pathway"/>
</dbReference>
<dbReference type="Reactome" id="R-BTA-5607764">
    <property type="pathway name" value="CLEC7A (Dectin-1) signaling"/>
</dbReference>
<dbReference type="Reactome" id="R-BTA-5684264">
    <property type="pathway name" value="MAP3K8 (TPL2)-dependent MAPK1/3 activation"/>
</dbReference>
<dbReference type="Reactome" id="R-BTA-5689880">
    <property type="pathway name" value="Ub-specific processing proteases"/>
</dbReference>
<dbReference type="Reactome" id="R-BTA-5689896">
    <property type="pathway name" value="Ovarian tumor domain proteases"/>
</dbReference>
<dbReference type="Reactome" id="R-BTA-9020702">
    <property type="pathway name" value="Interleukin-1 signaling"/>
</dbReference>
<dbReference type="Reactome" id="R-BTA-933542">
    <property type="pathway name" value="TRAF6 mediated NF-kB activation"/>
</dbReference>
<dbReference type="Reactome" id="R-BTA-937039">
    <property type="pathway name" value="IRAK1 recruits IKK complex"/>
</dbReference>
<dbReference type="Reactome" id="R-BTA-937041">
    <property type="pathway name" value="IKK complex recruitment mediated by RIP1"/>
</dbReference>
<dbReference type="Reactome" id="R-BTA-975144">
    <property type="pathway name" value="IRAK1 recruits IKK complex upon TLR7/8 or 9 stimulation"/>
</dbReference>
<dbReference type="Reactome" id="R-BTA-9758274">
    <property type="pathway name" value="Regulation of NF-kappa B signaling"/>
</dbReference>
<dbReference type="Reactome" id="R-BTA-9833482">
    <property type="pathway name" value="PKR-mediated signaling"/>
</dbReference>
<dbReference type="Reactome" id="R-BTA-9860276">
    <property type="pathway name" value="SLC15A4:TASL-dependent IRF5 activation"/>
</dbReference>
<dbReference type="Reactome" id="R-BTA-9860927">
    <property type="pathway name" value="Turbulent (oscillatory, disturbed) flow shear stress activates signaling by PIEZO1 and integrins in endothelial cells"/>
</dbReference>
<dbReference type="Reactome" id="R-BTA-9909505">
    <property type="pathway name" value="Modulation of host responses by IFN-stimulated genes"/>
</dbReference>
<dbReference type="Proteomes" id="UP000009136">
    <property type="component" value="Chromosome X"/>
</dbReference>
<dbReference type="Bgee" id="ENSBTAG00000006268">
    <property type="expression patterns" value="Expressed in choroid plexus and 106 other cell types or tissues"/>
</dbReference>
<dbReference type="GO" id="GO:0005737">
    <property type="term" value="C:cytoplasm"/>
    <property type="evidence" value="ECO:0000318"/>
    <property type="project" value="GO_Central"/>
</dbReference>
<dbReference type="GO" id="GO:0008385">
    <property type="term" value="C:IkappaB kinase complex"/>
    <property type="evidence" value="ECO:0000318"/>
    <property type="project" value="GO_Central"/>
</dbReference>
<dbReference type="GO" id="GO:0005634">
    <property type="term" value="C:nucleus"/>
    <property type="evidence" value="ECO:0000318"/>
    <property type="project" value="GO_Central"/>
</dbReference>
<dbReference type="GO" id="GO:0070530">
    <property type="term" value="F:K63-linked polyubiquitin modification-dependent protein binding"/>
    <property type="evidence" value="ECO:0000250"/>
    <property type="project" value="UniProtKB"/>
</dbReference>
<dbReference type="GO" id="GO:1990450">
    <property type="term" value="F:linear polyubiquitin binding"/>
    <property type="evidence" value="ECO:0000250"/>
    <property type="project" value="UniProtKB"/>
</dbReference>
<dbReference type="GO" id="GO:0046982">
    <property type="term" value="F:protein heterodimerization activity"/>
    <property type="evidence" value="ECO:0000250"/>
    <property type="project" value="UniProtKB"/>
</dbReference>
<dbReference type="GO" id="GO:0042803">
    <property type="term" value="F:protein homodimerization activity"/>
    <property type="evidence" value="ECO:0000250"/>
    <property type="project" value="UniProtKB"/>
</dbReference>
<dbReference type="GO" id="GO:0008270">
    <property type="term" value="F:zinc ion binding"/>
    <property type="evidence" value="ECO:0007669"/>
    <property type="project" value="UniProtKB-KW"/>
</dbReference>
<dbReference type="GO" id="GO:0006974">
    <property type="term" value="P:DNA damage response"/>
    <property type="evidence" value="ECO:0000250"/>
    <property type="project" value="UniProtKB"/>
</dbReference>
<dbReference type="GO" id="GO:0043123">
    <property type="term" value="P:positive regulation of canonical NF-kappaB signal transduction"/>
    <property type="evidence" value="ECO:0000250"/>
    <property type="project" value="UniProtKB"/>
</dbReference>
<dbReference type="GO" id="GO:0051092">
    <property type="term" value="P:positive regulation of NF-kappaB transcription factor activity"/>
    <property type="evidence" value="ECO:0000250"/>
    <property type="project" value="UniProtKB"/>
</dbReference>
<dbReference type="GO" id="GO:0050862">
    <property type="term" value="P:positive regulation of T cell receptor signaling pathway"/>
    <property type="evidence" value="ECO:0000250"/>
    <property type="project" value="UniProtKB"/>
</dbReference>
<dbReference type="GO" id="GO:0045944">
    <property type="term" value="P:positive regulation of transcription by RNA polymerase II"/>
    <property type="evidence" value="ECO:0000250"/>
    <property type="project" value="UniProtKB"/>
</dbReference>
<dbReference type="CDD" id="cd09803">
    <property type="entry name" value="UBAN"/>
    <property type="match status" value="1"/>
</dbReference>
<dbReference type="FunFam" id="1.20.5.390:FF:000002">
    <property type="entry name" value="NF-kappa-B essential modulator isoform X1"/>
    <property type="match status" value="1"/>
</dbReference>
<dbReference type="FunFam" id="1.20.5.390:FF:000003">
    <property type="entry name" value="NF-kappa-B essential modulator isoform X1"/>
    <property type="match status" value="1"/>
</dbReference>
<dbReference type="FunFam" id="1.20.5.990:FF:000003">
    <property type="entry name" value="NF-kappa-B essential modulator isoform X1"/>
    <property type="match status" value="1"/>
</dbReference>
<dbReference type="Gene3D" id="1.20.5.390">
    <property type="entry name" value="L1 transposable element, trimerization domain"/>
    <property type="match status" value="2"/>
</dbReference>
<dbReference type="Gene3D" id="1.20.5.990">
    <property type="entry name" value="Nemo cc2-lz domain - 1d5 darpin complex"/>
    <property type="match status" value="1"/>
</dbReference>
<dbReference type="InterPro" id="IPR032419">
    <property type="entry name" value="CC2-LZ_dom"/>
</dbReference>
<dbReference type="InterPro" id="IPR021063">
    <property type="entry name" value="NEMO_N"/>
</dbReference>
<dbReference type="InterPro" id="IPR034735">
    <property type="entry name" value="NEMO_ZF"/>
</dbReference>
<dbReference type="InterPro" id="IPR051301">
    <property type="entry name" value="Optineurin/NFkB_EssMod"/>
</dbReference>
<dbReference type="PANTHER" id="PTHR31553">
    <property type="entry name" value="NF-KAPPA-B ESSENTIAL MODULATOR"/>
    <property type="match status" value="1"/>
</dbReference>
<dbReference type="PANTHER" id="PTHR31553:SF3">
    <property type="entry name" value="NF-KAPPA-B ESSENTIAL MODULATOR"/>
    <property type="match status" value="1"/>
</dbReference>
<dbReference type="Pfam" id="PF16516">
    <property type="entry name" value="CC2-LZ"/>
    <property type="match status" value="1"/>
</dbReference>
<dbReference type="Pfam" id="PF11577">
    <property type="entry name" value="NEMO"/>
    <property type="match status" value="1"/>
</dbReference>
<dbReference type="Pfam" id="PF18414">
    <property type="entry name" value="zf_C2H2_10"/>
    <property type="match status" value="1"/>
</dbReference>
<dbReference type="PROSITE" id="PS51801">
    <property type="entry name" value="ZF_CCHC_NOA"/>
    <property type="match status" value="1"/>
</dbReference>
<accession>Q95KU9</accession>
<accession>A2VDM3</accession>
<accession>Q5E9T0</accession>
<accession>Q5EA16</accession>
<sequence length="419" mass="48570">MSRPPWKSPLCEMVQPSGSPAGDQDMLGEESSLGKPAMLHVPSEQGTPETFQRCLEENQELRDAIRQSNQMLRERCEELQHFQGNQREEKAFLMQKFQEARDLVVRLSLEKRELRQQREQALKEVERLKTCQQQMAEDKASVKAQVTSLLGELQESQSRLEAATKERQALESRARVASEKARQLESEREALEQRHSVQVDQLVLQNESMEAALRMERQAASEEKRKLAQLQVAYHQLFQEYDNHMKSSMVSSERNRGLQLEDLKQQLQQAEEALVAKQEVIDKLKEEAEQHKIVMETVPVLKAQADIYKADFQAERQAREKLAEKKEFLQEQLEQLQREYSRLKTSCQESARIEDMRKRHVEVSQPPLAPGPAHHSFHLNPSSQRRSPPDEPPKFCCPKCQYQAPDIDTLQIHVMECIE</sequence>
<comment type="function">
    <text evidence="3">Regulatory subunit of the IKK core complex which phosphorylates inhibitors of NF-kappa-B thus leading to the dissociation of the inhibitor/NF-kappa-B complex and ultimately the degradation of the inhibitor. Its binding to scaffolding polyubiquitin plays a key role in IKK activation by multiple signaling receptor pathways. Can recognize and bind both 'Lys-63'-linked and linear polyubiquitin upon cell stimulation, with a much highr affinity for linear polyubiquitin. Could be implicated in NF-kappa-B-mediated protection from cytokine toxicity. Essential for viral activation of IRF3. Involved in TLR3- and IFIH1-mediated antiviral innate response; this function requires 'Lys-27'-linked polyubiquitination.</text>
</comment>
<comment type="subunit">
    <text evidence="2 3 7">Homodimer; disulfide-linked (By similarity). Component of the I-kappa-B-kinase (IKK) core complex consisting of CHUK, IKBKB and IKBKG; probably four alpha/CHUK-beta/IKBKB dimers are associated with four gamma/IKBKG subunits (PubMed:12459277). The IKK core complex seems to associate with regulatory or adapter proteins to form a IKK-signalosome holo-complex (PubMed:12459277). The IKK complex associates with TERF2IP/RAP1, leading to promote IKK-mediated phosphorylation of RELA/p65 (By similarity). Part of a complex composed of NCOA2, NCOA3, CHUK/IKKA, IKBKB, IKBKG and CREBBP. Interacts with COPS3, CYLD, NALP2, TRPC4AP and PIDD1. Interacts with ATM; the complex is exported from the nucleus. Interacts with TRAF6. Interacts with IKBKE. Interacts with TANK; the interaction is enhanced by IKBKE and TBK1. Part of a ternary complex consisting of TANK, IKBKB and IKBKG. Interacts with ZFAND5. Interacts with RIPK2. Interacts with TNIP1 and TNFAIP3; TNIP1 facilitates the TNFAIP3-mediated de-ubiquitination of IKBKG. Interacts with TNFAIP3; the interaction is induced by TNF stimulation and by polyubiquitin. Binds (via UBAN region) polyubiquitin; binds both 'Lys-63'-linked and linear polyubiquitin, with higher affinity for linear ubiquitin. Interacts with NLRP10. Interacts with TANK; this interaction increases in response to DNA damage. Interacts with USP10; this interaction increases in response to DNA damage. Interacts with ZC3H12A; this interaction increases in response to DNA damage. Interacts with IFIT5; the interaction synergizes the recruitment of IKK to MAP3K7 and enhances IKK phosphorylation. Interacts with TRIM29; this interaction induces IKBKG/NEMO ubiquitination and proteolytic degradation. Interacts with TRIM13; this interaction leads to IKBKG/NEMO ubiquitination. Interacts with ARFIP2 (By similarity). Interacts with RIPK1 (By similarity). Interacts with (ubiquitinated) BCL10; interaction with polyubiquitinated BCL10 via both 'Lys-63'-linked and linear ubiquitin is required for TCR-induced NF-kappa-B activation (By similarity). Interacts with MARCHF2; during the late stages of macrophage viral and bacterial infection; the interaction leads to ubiquitination and degradation of IKBKG/NEMO (By similarity).</text>
</comment>
<comment type="subcellular location">
    <subcellularLocation>
        <location evidence="3">Cytoplasm</location>
    </subcellularLocation>
    <subcellularLocation>
        <location evidence="3">Nucleus</location>
    </subcellularLocation>
    <text evidence="3">Sumoylated NEMO accumulates in the nucleus in response to genotoxic stress.</text>
</comment>
<comment type="domain">
    <text evidence="3">The leucine-zipper domain and the CCHC NOA-type zinc-fingers constitute the UBAN region and are essential for polyubiquitin binding and for the activation of IRF3.</text>
</comment>
<comment type="PTM">
    <text evidence="3">Phosphorylation at Ser-68 attenuates aminoterminal homodimerization.</text>
</comment>
<comment type="PTM">
    <text evidence="3">Polyubiquitinated on Lys-285 through 'Lys-63'; the ubiquitination is mediated downstream of NOD2 and RIPK2 and probably plays a role in signaling by facilitating interactions with ubiquitin domain-containing proteins and activates the NF-kappa-B pathway. Polyubiquitinated on Lys-399 through 'Lys-63'; the ubiquitination is mediated by BCL10, MALT1 and TRAF6 and probably plays a role in signaling by facilitating interactions with ubiquitin domain-containing proteins and activates the NF-kappa-B pathway. Monoubiquitinated on Lys-277 and Lys-309; promotes nuclear export. Polyubiquitinated through 'Lys-27' by TRIM23; involved in antiviral innate and inflammatory responses. Linear polyubiquitinated on Lys-111, Lys-143, Lys-226, Lys-246, Lys-264, Lys-277, Lys-285, Lys-292, Lys-302, Lys-309 and Lys-326; the head-to-tail polyubiquitination is mediated by the LUBAC complex and plays a key role in NF-kappa-B activation. Deubiquitinated by USP10 in a TANK-dependent and -independent manner, leading to the negative regulation of NF-kappa-B signaling upon DNA damage (By similarity). Ubiquitinated at Lys-326 by MARCHF2 following bacterial and viral infection which leads to its degradation (By similarity). Polyubiquitinated via 'Lys-29'-linked ubiquitin; leading to lysosomal degradation (By similarity).</text>
</comment>
<comment type="PTM">
    <text evidence="3">Sumoylated on Lys-277 and Lys-309 with SUMO1.</text>
</comment>
<comment type="PTM">
    <text evidence="3">Neddylated by TRIM40, resulting in stabilization of NFKBIA and down-regulation of NF-kappa-B activity.</text>
</comment>
<organism>
    <name type="scientific">Bos taurus</name>
    <name type="common">Bovine</name>
    <dbReference type="NCBI Taxonomy" id="9913"/>
    <lineage>
        <taxon>Eukaryota</taxon>
        <taxon>Metazoa</taxon>
        <taxon>Chordata</taxon>
        <taxon>Craniata</taxon>
        <taxon>Vertebrata</taxon>
        <taxon>Euteleostomi</taxon>
        <taxon>Mammalia</taxon>
        <taxon>Eutheria</taxon>
        <taxon>Laurasiatheria</taxon>
        <taxon>Artiodactyla</taxon>
        <taxon>Ruminantia</taxon>
        <taxon>Pecora</taxon>
        <taxon>Bovidae</taxon>
        <taxon>Bovinae</taxon>
        <taxon>Bos</taxon>
    </lineage>
</organism>
<keyword id="KW-0175">Coiled coil</keyword>
<keyword id="KW-0963">Cytoplasm</keyword>
<keyword id="KW-1015">Disulfide bond</keyword>
<keyword id="KW-0227">DNA damage</keyword>
<keyword id="KW-1017">Isopeptide bond</keyword>
<keyword id="KW-0479">Metal-binding</keyword>
<keyword id="KW-0539">Nucleus</keyword>
<keyword id="KW-0597">Phosphoprotein</keyword>
<keyword id="KW-1185">Reference proteome</keyword>
<keyword id="KW-0804">Transcription</keyword>
<keyword id="KW-0805">Transcription regulation</keyword>
<keyword id="KW-0832">Ubl conjugation</keyword>
<keyword id="KW-0862">Zinc</keyword>
<keyword id="KW-0863">Zinc-finger</keyword>
<feature type="chain" id="PRO_0000269196" description="NF-kappa-B essential modulator">
    <location>
        <begin position="1"/>
        <end position="419"/>
    </location>
</feature>
<feature type="zinc finger region" description="CCHC NOA-type" evidence="5">
    <location>
        <begin position="389"/>
        <end position="419"/>
    </location>
</feature>
<feature type="region of interest" description="Required for interaction with and ubiquitination by MARCHF2" evidence="3">
    <location>
        <begin position="1"/>
        <end position="197"/>
    </location>
</feature>
<feature type="region of interest" description="Disordered" evidence="6">
    <location>
        <begin position="1"/>
        <end position="48"/>
    </location>
</feature>
<feature type="region of interest" description="Interaction with CHUK/IKBKB" evidence="1">
    <location>
        <begin position="44"/>
        <end position="111"/>
    </location>
</feature>
<feature type="region of interest" description="Interaction with TANK" evidence="1">
    <location>
        <begin position="150"/>
        <end position="257"/>
    </location>
</feature>
<feature type="region of interest" description="Ubiquitin-binding (UBAN)">
    <location>
        <begin position="242"/>
        <end position="350"/>
    </location>
</feature>
<feature type="region of interest" description="Self-association" evidence="1">
    <location>
        <begin position="246"/>
        <end position="365"/>
    </location>
</feature>
<feature type="region of interest" description="Required for interaction with TNFAIP3" evidence="1">
    <location>
        <begin position="251"/>
        <end position="419"/>
    </location>
</feature>
<feature type="region of interest" description="Leucine-zipper" evidence="4">
    <location>
        <begin position="322"/>
        <end position="343"/>
    </location>
</feature>
<feature type="region of interest" description="Disordered" evidence="6">
    <location>
        <begin position="356"/>
        <end position="394"/>
    </location>
</feature>
<feature type="region of interest" description="Interaction with CYLD" evidence="1">
    <location>
        <begin position="382"/>
        <end position="419"/>
    </location>
</feature>
<feature type="coiled-coil region" evidence="4">
    <location>
        <begin position="49"/>
        <end position="353"/>
    </location>
</feature>
<feature type="binding site" evidence="5">
    <location>
        <position position="397"/>
    </location>
    <ligand>
        <name>Zn(2+)</name>
        <dbReference type="ChEBI" id="CHEBI:29105"/>
    </ligand>
</feature>
<feature type="binding site" evidence="5">
    <location>
        <position position="400"/>
    </location>
    <ligand>
        <name>Zn(2+)</name>
        <dbReference type="ChEBI" id="CHEBI:29105"/>
    </ligand>
</feature>
<feature type="binding site" evidence="5">
    <location>
        <position position="413"/>
    </location>
    <ligand>
        <name>Zn(2+)</name>
        <dbReference type="ChEBI" id="CHEBI:29105"/>
    </ligand>
</feature>
<feature type="binding site" evidence="5">
    <location>
        <position position="417"/>
    </location>
    <ligand>
        <name>Zn(2+)</name>
        <dbReference type="ChEBI" id="CHEBI:29105"/>
    </ligand>
</feature>
<feature type="modified residue" description="Phosphoserine; by IKKB" evidence="3">
    <location>
        <position position="31"/>
    </location>
</feature>
<feature type="modified residue" description="Phosphoserine; by IKKB" evidence="3">
    <location>
        <position position="43"/>
    </location>
</feature>
<feature type="modified residue" description="Phosphoserine" evidence="3">
    <location>
        <position position="68"/>
    </location>
</feature>
<feature type="modified residue" description="Phosphoserine; by IKKB" evidence="3">
    <location>
        <position position="376"/>
    </location>
</feature>
<feature type="modified residue" description="Phosphoserine" evidence="3">
    <location>
        <position position="387"/>
    </location>
</feature>
<feature type="disulfide bond" description="Interchain" evidence="1">
    <location>
        <position position="54"/>
    </location>
</feature>
<feature type="disulfide bond" description="Interchain" evidence="1">
    <location>
        <position position="347"/>
    </location>
</feature>
<feature type="cross-link" description="Glycyl lysine isopeptide (Lys-Gly) (interchain with G-Cter in ubiquitin)" evidence="3">
    <location>
        <position position="111"/>
    </location>
</feature>
<feature type="cross-link" description="Glycyl lysine isopeptide (Lys-Gly) (interchain with G-Cter in ubiquitin)" evidence="3">
    <location>
        <position position="139"/>
    </location>
</feature>
<feature type="cross-link" description="Glycyl lysine isopeptide (Lys-Gly) (interchain with G-Cter in ubiquitin)" evidence="3">
    <location>
        <position position="143"/>
    </location>
</feature>
<feature type="cross-link" description="Glycyl lysine isopeptide (Lys-Gly) (interchain with G-Cter in ubiquitin)" evidence="3">
    <location>
        <position position="226"/>
    </location>
</feature>
<feature type="cross-link" description="Glycyl lysine isopeptide (Lys-Gly) (interchain with G-Cter in ubiquitin)" evidence="3">
    <location>
        <position position="246"/>
    </location>
</feature>
<feature type="cross-link" description="Glycyl lysine isopeptide (Lys-Gly) (interchain with G-Cter in ubiquitin)" evidence="3">
    <location>
        <position position="264"/>
    </location>
</feature>
<feature type="cross-link" description="Glycyl lysine isopeptide (Lys-Gly) (interchain with G-Cter in SUMO); alternate" evidence="1">
    <location>
        <position position="277"/>
    </location>
</feature>
<feature type="cross-link" description="Glycyl lysine isopeptide (Lys-Gly) (interchain with G-Cter in ubiquitin); alternate" evidence="3">
    <location>
        <position position="277"/>
    </location>
</feature>
<feature type="cross-link" description="Glycyl lysine isopeptide (Lys-Gly) (interchain with G-Cter in ubiquitin)" evidence="3">
    <location>
        <position position="283"/>
    </location>
</feature>
<feature type="cross-link" description="Glycyl lysine isopeptide (Lys-Gly) (interchain with G-Cter in ubiquitin)" evidence="3">
    <location>
        <position position="285"/>
    </location>
</feature>
<feature type="cross-link" description="Glycyl lysine isopeptide (Lys-Gly) (interchain with G-Cter in ubiquitin)" evidence="3">
    <location>
        <position position="292"/>
    </location>
</feature>
<feature type="cross-link" description="Glycyl lysine isopeptide (Lys-Gly) (interchain with G-Cter in ubiquitin)" evidence="3">
    <location>
        <position position="302"/>
    </location>
</feature>
<feature type="cross-link" description="Glycyl lysine isopeptide (Lys-Gly) (interchain with G-Cter in SUMO); alternate" evidence="1">
    <location>
        <position position="309"/>
    </location>
</feature>
<feature type="cross-link" description="Glycyl lysine isopeptide (Lys-Gly) (interchain with G-Cter in ubiquitin); alternate" evidence="3">
    <location>
        <position position="309"/>
    </location>
</feature>
<feature type="cross-link" description="Glycyl lysine isopeptide (Lys-Gly) (interchain with G-Cter in ubiquitin)" evidence="3">
    <location>
        <position position="321"/>
    </location>
</feature>
<feature type="cross-link" description="Glycyl lysine isopeptide (Lys-Gly) (interchain with G-Cter in ubiquitin)" evidence="2">
    <location>
        <position position="325"/>
    </location>
</feature>
<feature type="cross-link" description="Glycyl lysine isopeptide (Lys-Gly) (interchain with G-Cter in ubiquitin)" evidence="3">
    <location>
        <position position="326"/>
    </location>
</feature>
<feature type="cross-link" description="Glycyl lysine isopeptide (Lys-Gly) (interchain with G-Cter in ubiquitin)" evidence="3">
    <location>
        <position position="399"/>
    </location>
</feature>
<feature type="sequence conflict" description="In Ref. 2; AAX08770." evidence="8" ref="2">
    <original>A</original>
    <variation>T</variation>
    <location>
        <position position="211"/>
    </location>
</feature>
<feature type="sequence conflict" description="In Ref. 2; AAX08857." evidence="8" ref="2">
    <original>DLKQ</original>
    <variation>ISA</variation>
    <location>
        <begin position="262"/>
        <end position="265"/>
    </location>
</feature>
<gene>
    <name type="primary">IKBKG</name>
    <name type="synonym">NEMO</name>
</gene>
<protein>
    <recommendedName>
        <fullName>NF-kappa-B essential modulator</fullName>
        <shortName>NEMO</shortName>
    </recommendedName>
    <alternativeName>
        <fullName>IkB kinase-associated protein 1</fullName>
        <shortName>IKKAP1</shortName>
    </alternativeName>
    <alternativeName>
        <fullName>Inhibitor of nuclear factor kappa-B kinase subunit gamma</fullName>
        <shortName>I-kappa-B kinase subunit gamma</shortName>
        <shortName>IKK-gamma</shortName>
        <shortName>IKKG</shortName>
        <shortName>IkB kinase subunit gamma</shortName>
    </alternativeName>
    <alternativeName>
        <fullName>NF-kappa-B essential modifier</fullName>
    </alternativeName>
</protein>
<evidence type="ECO:0000250" key="1"/>
<evidence type="ECO:0000250" key="2">
    <source>
        <dbReference type="UniProtKB" id="O88522"/>
    </source>
</evidence>
<evidence type="ECO:0000250" key="3">
    <source>
        <dbReference type="UniProtKB" id="Q9Y6K9"/>
    </source>
</evidence>
<evidence type="ECO:0000255" key="4"/>
<evidence type="ECO:0000255" key="5">
    <source>
        <dbReference type="PROSITE-ProRule" id="PRU01142"/>
    </source>
</evidence>
<evidence type="ECO:0000256" key="6">
    <source>
        <dbReference type="SAM" id="MobiDB-lite"/>
    </source>
</evidence>
<evidence type="ECO:0000269" key="7">
    <source>
    </source>
</evidence>
<evidence type="ECO:0000305" key="8"/>
<proteinExistence type="evidence at protein level"/>
<reference key="1">
    <citation type="journal article" date="2002" name="Gene">
        <title>Characterization of the bovine IkappaB kinases (IKK)alpha and IKKbeta, the regulatory subunit NEMO and their substrate IkappaBalpha.</title>
        <authorList>
            <person name="Rottenberg S."/>
            <person name="Schmuckli-Maurer J."/>
            <person name="Grimm S."/>
            <person name="Heussler V.T."/>
            <person name="Dobbelaere D.A.E."/>
        </authorList>
    </citation>
    <scope>NUCLEOTIDE SEQUENCE [MRNA]</scope>
    <scope>SUBUNIT OF THE IKK COMPLEX</scope>
</reference>
<reference key="2">
    <citation type="journal article" date="2005" name="BMC Genomics">
        <title>Characterization of 954 bovine full-CDS cDNA sequences.</title>
        <authorList>
            <person name="Harhay G.P."/>
            <person name="Sonstegard T.S."/>
            <person name="Keele J.W."/>
            <person name="Heaton M.P."/>
            <person name="Clawson M.L."/>
            <person name="Snelling W.M."/>
            <person name="Wiedmann R.T."/>
            <person name="Van Tassell C.P."/>
            <person name="Smith T.P.L."/>
        </authorList>
    </citation>
    <scope>NUCLEOTIDE SEQUENCE [LARGE SCALE MRNA]</scope>
</reference>
<reference key="3">
    <citation type="submission" date="2007-02" db="EMBL/GenBank/DDBJ databases">
        <authorList>
            <consortium name="NIH - Mammalian Gene Collection (MGC) project"/>
        </authorList>
    </citation>
    <scope>NUCLEOTIDE SEQUENCE [LARGE SCALE MRNA]</scope>
    <source>
        <strain>Hereford</strain>
        <tissue>Fetal skin</tissue>
    </source>
</reference>
<name>NEMO_BOVIN</name>